<proteinExistence type="evidence at protein level"/>
<name>FOXP4_HUMAN</name>
<feature type="chain" id="PRO_0000091889" description="Forkhead box protein P4">
    <location>
        <begin position="1"/>
        <end position="680"/>
    </location>
</feature>
<feature type="zinc finger region" description="C2H2-type">
    <location>
        <begin position="307"/>
        <end position="332"/>
    </location>
</feature>
<feature type="DNA-binding region" description="Fork-head" evidence="2">
    <location>
        <begin position="467"/>
        <end position="559"/>
    </location>
</feature>
<feature type="region of interest" description="Disordered" evidence="3">
    <location>
        <begin position="1"/>
        <end position="56"/>
    </location>
</feature>
<feature type="region of interest" description="Disordered" evidence="3">
    <location>
        <begin position="262"/>
        <end position="306"/>
    </location>
</feature>
<feature type="region of interest" description="Leucine-zipper">
    <location>
        <begin position="349"/>
        <end position="370"/>
    </location>
</feature>
<feature type="region of interest" description="Disordered" evidence="3">
    <location>
        <begin position="407"/>
        <end position="445"/>
    </location>
</feature>
<feature type="region of interest" description="Disordered" evidence="3">
    <location>
        <begin position="602"/>
        <end position="680"/>
    </location>
</feature>
<feature type="compositionally biased region" description="Polar residues" evidence="3">
    <location>
        <begin position="1"/>
        <end position="17"/>
    </location>
</feature>
<feature type="compositionally biased region" description="Polar residues" evidence="3">
    <location>
        <begin position="276"/>
        <end position="286"/>
    </location>
</feature>
<feature type="compositionally biased region" description="Basic and acidic residues" evidence="3">
    <location>
        <begin position="287"/>
        <end position="298"/>
    </location>
</feature>
<feature type="compositionally biased region" description="Polar residues" evidence="3">
    <location>
        <begin position="617"/>
        <end position="635"/>
    </location>
</feature>
<feature type="compositionally biased region" description="Acidic residues" evidence="3">
    <location>
        <begin position="668"/>
        <end position="680"/>
    </location>
</feature>
<feature type="modified residue" description="Phosphoserine" evidence="6">
    <location>
        <position position="52"/>
    </location>
</feature>
<feature type="modified residue" description="Phosphoserine" evidence="6">
    <location>
        <position position="86"/>
    </location>
</feature>
<feature type="modified residue" description="Phosphoserine" evidence="6">
    <location>
        <position position="554"/>
    </location>
</feature>
<feature type="cross-link" description="Glycyl lysine isopeptide (Lys-Gly) (interchain with G-Cter in SUMO2)" evidence="8">
    <location>
        <position position="175"/>
    </location>
</feature>
<feature type="cross-link" description="Glycyl lysine isopeptide (Lys-Gly) (interchain with G-Cter in SUMO2)" evidence="7 8">
    <location>
        <position position="246"/>
    </location>
</feature>
<feature type="cross-link" description="Glycyl lysine isopeptide (Lys-Gly) (interchain with G-Cter in SUMO2)" evidence="8">
    <location>
        <position position="378"/>
    </location>
</feature>
<feature type="splice variant" id="VSP_043034" description="In isoform 2." evidence="5">
    <location>
        <begin position="141"/>
        <end position="142"/>
    </location>
</feature>
<feature type="splice variant" id="VSP_043465" description="In isoform 3." evidence="5">
    <location>
        <position position="220"/>
    </location>
</feature>
<feature type="splice variant" id="VSP_043466" description="In isoform 3." evidence="5">
    <location>
        <begin position="384"/>
        <end position="395"/>
    </location>
</feature>
<feature type="sequence variant" id="VAR_036219" description="In a breast cancer sample; somatic mutation; dbSNP:rs867245225." evidence="4">
    <original>A</original>
    <variation>T</variation>
    <location>
        <position position="464"/>
    </location>
</feature>
<feature type="helix" evidence="9">
    <location>
        <begin position="472"/>
        <end position="482"/>
    </location>
</feature>
<feature type="helix" evidence="9">
    <location>
        <begin position="490"/>
        <end position="500"/>
    </location>
</feature>
<feature type="helix" evidence="9">
    <location>
        <begin position="502"/>
        <end position="506"/>
    </location>
</feature>
<feature type="helix" evidence="9">
    <location>
        <begin position="509"/>
        <end position="521"/>
    </location>
</feature>
<feature type="strand" evidence="9">
    <location>
        <begin position="525"/>
        <end position="528"/>
    </location>
</feature>
<feature type="strand" evidence="9">
    <location>
        <begin position="535"/>
        <end position="538"/>
    </location>
</feature>
<evidence type="ECO:0000250" key="1"/>
<evidence type="ECO:0000255" key="2">
    <source>
        <dbReference type="PROSITE-ProRule" id="PRU00089"/>
    </source>
</evidence>
<evidence type="ECO:0000256" key="3">
    <source>
        <dbReference type="SAM" id="MobiDB-lite"/>
    </source>
</evidence>
<evidence type="ECO:0000269" key="4">
    <source>
    </source>
</evidence>
<evidence type="ECO:0000303" key="5">
    <source>
    </source>
</evidence>
<evidence type="ECO:0007744" key="6">
    <source>
    </source>
</evidence>
<evidence type="ECO:0007744" key="7">
    <source>
    </source>
</evidence>
<evidence type="ECO:0007744" key="8">
    <source>
    </source>
</evidence>
<evidence type="ECO:0007829" key="9">
    <source>
        <dbReference type="PDB" id="6XAT"/>
    </source>
</evidence>
<keyword id="KW-0002">3D-structure</keyword>
<keyword id="KW-0025">Alternative splicing</keyword>
<keyword id="KW-0238">DNA-binding</keyword>
<keyword id="KW-1017">Isopeptide bond</keyword>
<keyword id="KW-0479">Metal-binding</keyword>
<keyword id="KW-0539">Nucleus</keyword>
<keyword id="KW-0597">Phosphoprotein</keyword>
<keyword id="KW-1267">Proteomics identification</keyword>
<keyword id="KW-1185">Reference proteome</keyword>
<keyword id="KW-0678">Repressor</keyword>
<keyword id="KW-0804">Transcription</keyword>
<keyword id="KW-0805">Transcription regulation</keyword>
<keyword id="KW-0832">Ubl conjugation</keyword>
<keyword id="KW-0862">Zinc</keyword>
<keyword id="KW-0863">Zinc-finger</keyword>
<comment type="function">
    <text evidence="1">Transcriptional repressor that represses lung-specific expression.</text>
</comment>
<comment type="subunit">
    <text evidence="1">Forms homodimers and heterodimers with FOXP1 and FOXP2. Dimerization is required for DNA-binding (By similarity).</text>
</comment>
<comment type="interaction">
    <interactant intactId="EBI-1054619">
        <id>Q8IVH2</id>
    </interactant>
    <interactant intactId="EBI-983809">
        <id>Q9H334</id>
        <label>FOXP1</label>
    </interactant>
    <organismsDiffer>false</organismsDiffer>
    <experiments>6</experiments>
</comment>
<comment type="interaction">
    <interactant intactId="EBI-1054619">
        <id>Q8IVH2</id>
    </interactant>
    <interactant intactId="EBI-983612">
        <id>O15409</id>
        <label>FOXP2</label>
    </interactant>
    <organismsDiffer>false</organismsDiffer>
    <experiments>9</experiments>
</comment>
<comment type="interaction">
    <interactant intactId="EBI-25885364">
        <id>Q8IVH2-2</id>
    </interactant>
    <interactant intactId="EBI-399080">
        <id>Q92993</id>
        <label>KAT5</label>
    </interactant>
    <organismsDiffer>false</organismsDiffer>
    <experiments>3</experiments>
</comment>
<comment type="interaction">
    <interactant intactId="EBI-25885364">
        <id>Q8IVH2-2</id>
    </interactant>
    <interactant intactId="EBI-11742507">
        <id>Q8TAP4-4</id>
        <label>LMO3</label>
    </interactant>
    <organismsDiffer>false</organismsDiffer>
    <experiments>3</experiments>
</comment>
<comment type="interaction">
    <interactant intactId="EBI-25885364">
        <id>Q8IVH2-2</id>
    </interactant>
    <interactant intactId="EBI-1383528">
        <id>P17252</id>
        <label>PRKCA</label>
    </interactant>
    <organismsDiffer>false</organismsDiffer>
    <experiments>3</experiments>
</comment>
<comment type="interaction">
    <interactant intactId="EBI-25885364">
        <id>Q8IVH2-2</id>
    </interactant>
    <interactant intactId="EBI-9090795">
        <id>Q15047-2</id>
        <label>SETDB1</label>
    </interactant>
    <organismsDiffer>false</organismsDiffer>
    <experiments>3</experiments>
</comment>
<comment type="interaction">
    <interactant intactId="EBI-25885364">
        <id>Q8IVH2-2</id>
    </interactant>
    <interactant intactId="EBI-359832">
        <id>P61981</id>
        <label>YWHAG</label>
    </interactant>
    <organismsDiffer>false</organismsDiffer>
    <experiments>3</experiments>
</comment>
<comment type="subcellular location">
    <subcellularLocation>
        <location evidence="2">Nucleus</location>
    </subcellularLocation>
</comment>
<comment type="alternative products">
    <event type="alternative splicing"/>
    <isoform>
        <id>Q8IVH2-1</id>
        <name>1</name>
        <sequence type="displayed"/>
    </isoform>
    <isoform>
        <id>Q8IVH2-2</id>
        <name>2</name>
        <sequence type="described" ref="VSP_043034"/>
    </isoform>
    <isoform>
        <id>Q8IVH2-3</id>
        <name>3</name>
        <sequence type="described" ref="VSP_043465 VSP_043466"/>
    </isoform>
</comment>
<comment type="domain">
    <text evidence="1">The leucine-zipper is required for dimerization and transcriptional repression.</text>
</comment>
<reference key="1">
    <citation type="submission" date="2002-03" db="EMBL/GenBank/DDBJ databases">
        <title>Isolation, mapping, and characterization of a novel human cDNA differentially expressed in the fundus of W/Wv mutant mice.</title>
        <authorList>
            <person name="Daigo Y."/>
            <person name="Takayama I."/>
            <person name="Fujino M.A."/>
        </authorList>
    </citation>
    <scope>NUCLEOTIDE SEQUENCE [MRNA] (ISOFORM 1)</scope>
</reference>
<reference key="2">
    <citation type="journal article" date="2003" name="Nature">
        <title>The DNA sequence and analysis of human chromosome 6.</title>
        <authorList>
            <person name="Mungall A.J."/>
            <person name="Palmer S.A."/>
            <person name="Sims S.K."/>
            <person name="Edwards C.A."/>
            <person name="Ashurst J.L."/>
            <person name="Wilming L."/>
            <person name="Jones M.C."/>
            <person name="Horton R."/>
            <person name="Hunt S.E."/>
            <person name="Scott C.E."/>
            <person name="Gilbert J.G.R."/>
            <person name="Clamp M.E."/>
            <person name="Bethel G."/>
            <person name="Milne S."/>
            <person name="Ainscough R."/>
            <person name="Almeida J.P."/>
            <person name="Ambrose K.D."/>
            <person name="Andrews T.D."/>
            <person name="Ashwell R.I.S."/>
            <person name="Babbage A.K."/>
            <person name="Bagguley C.L."/>
            <person name="Bailey J."/>
            <person name="Banerjee R."/>
            <person name="Barker D.J."/>
            <person name="Barlow K.F."/>
            <person name="Bates K."/>
            <person name="Beare D.M."/>
            <person name="Beasley H."/>
            <person name="Beasley O."/>
            <person name="Bird C.P."/>
            <person name="Blakey S.E."/>
            <person name="Bray-Allen S."/>
            <person name="Brook J."/>
            <person name="Brown A.J."/>
            <person name="Brown J.Y."/>
            <person name="Burford D.C."/>
            <person name="Burrill W."/>
            <person name="Burton J."/>
            <person name="Carder C."/>
            <person name="Carter N.P."/>
            <person name="Chapman J.C."/>
            <person name="Clark S.Y."/>
            <person name="Clark G."/>
            <person name="Clee C.M."/>
            <person name="Clegg S."/>
            <person name="Cobley V."/>
            <person name="Collier R.E."/>
            <person name="Collins J.E."/>
            <person name="Colman L.K."/>
            <person name="Corby N.R."/>
            <person name="Coville G.J."/>
            <person name="Culley K.M."/>
            <person name="Dhami P."/>
            <person name="Davies J."/>
            <person name="Dunn M."/>
            <person name="Earthrowl M.E."/>
            <person name="Ellington A.E."/>
            <person name="Evans K.A."/>
            <person name="Faulkner L."/>
            <person name="Francis M.D."/>
            <person name="Frankish A."/>
            <person name="Frankland J."/>
            <person name="French L."/>
            <person name="Garner P."/>
            <person name="Garnett J."/>
            <person name="Ghori M.J."/>
            <person name="Gilby L.M."/>
            <person name="Gillson C.J."/>
            <person name="Glithero R.J."/>
            <person name="Grafham D.V."/>
            <person name="Grant M."/>
            <person name="Gribble S."/>
            <person name="Griffiths C."/>
            <person name="Griffiths M.N.D."/>
            <person name="Hall R."/>
            <person name="Halls K.S."/>
            <person name="Hammond S."/>
            <person name="Harley J.L."/>
            <person name="Hart E.A."/>
            <person name="Heath P.D."/>
            <person name="Heathcott R."/>
            <person name="Holmes S.J."/>
            <person name="Howden P.J."/>
            <person name="Howe K.L."/>
            <person name="Howell G.R."/>
            <person name="Huckle E."/>
            <person name="Humphray S.J."/>
            <person name="Humphries M.D."/>
            <person name="Hunt A.R."/>
            <person name="Johnson C.M."/>
            <person name="Joy A.A."/>
            <person name="Kay M."/>
            <person name="Keenan S.J."/>
            <person name="Kimberley A.M."/>
            <person name="King A."/>
            <person name="Laird G.K."/>
            <person name="Langford C."/>
            <person name="Lawlor S."/>
            <person name="Leongamornlert D.A."/>
            <person name="Leversha M."/>
            <person name="Lloyd C.R."/>
            <person name="Lloyd D.M."/>
            <person name="Loveland J.E."/>
            <person name="Lovell J."/>
            <person name="Martin S."/>
            <person name="Mashreghi-Mohammadi M."/>
            <person name="Maslen G.L."/>
            <person name="Matthews L."/>
            <person name="McCann O.T."/>
            <person name="McLaren S.J."/>
            <person name="McLay K."/>
            <person name="McMurray A."/>
            <person name="Moore M.J.F."/>
            <person name="Mullikin J.C."/>
            <person name="Niblett D."/>
            <person name="Nickerson T."/>
            <person name="Novik K.L."/>
            <person name="Oliver K."/>
            <person name="Overton-Larty E.K."/>
            <person name="Parker A."/>
            <person name="Patel R."/>
            <person name="Pearce A.V."/>
            <person name="Peck A.I."/>
            <person name="Phillimore B.J.C.T."/>
            <person name="Phillips S."/>
            <person name="Plumb R.W."/>
            <person name="Porter K.M."/>
            <person name="Ramsey Y."/>
            <person name="Ranby S.A."/>
            <person name="Rice C.M."/>
            <person name="Ross M.T."/>
            <person name="Searle S.M."/>
            <person name="Sehra H.K."/>
            <person name="Sheridan E."/>
            <person name="Skuce C.D."/>
            <person name="Smith S."/>
            <person name="Smith M."/>
            <person name="Spraggon L."/>
            <person name="Squares S.L."/>
            <person name="Steward C.A."/>
            <person name="Sycamore N."/>
            <person name="Tamlyn-Hall G."/>
            <person name="Tester J."/>
            <person name="Theaker A.J."/>
            <person name="Thomas D.W."/>
            <person name="Thorpe A."/>
            <person name="Tracey A."/>
            <person name="Tromans A."/>
            <person name="Tubby B."/>
            <person name="Wall M."/>
            <person name="Wallis J.M."/>
            <person name="West A.P."/>
            <person name="White S.S."/>
            <person name="Whitehead S.L."/>
            <person name="Whittaker H."/>
            <person name="Wild A."/>
            <person name="Willey D.J."/>
            <person name="Wilmer T.E."/>
            <person name="Wood J.M."/>
            <person name="Wray P.W."/>
            <person name="Wyatt J.C."/>
            <person name="Young L."/>
            <person name="Younger R.M."/>
            <person name="Bentley D.R."/>
            <person name="Coulson A."/>
            <person name="Durbin R.M."/>
            <person name="Hubbard T."/>
            <person name="Sulston J.E."/>
            <person name="Dunham I."/>
            <person name="Rogers J."/>
            <person name="Beck S."/>
        </authorList>
    </citation>
    <scope>NUCLEOTIDE SEQUENCE [LARGE SCALE GENOMIC DNA]</scope>
</reference>
<reference key="3">
    <citation type="submission" date="2005-07" db="EMBL/GenBank/DDBJ databases">
        <authorList>
            <person name="Mural R.J."/>
            <person name="Istrail S."/>
            <person name="Sutton G.G."/>
            <person name="Florea L."/>
            <person name="Halpern A.L."/>
            <person name="Mobarry C.M."/>
            <person name="Lippert R."/>
            <person name="Walenz B."/>
            <person name="Shatkay H."/>
            <person name="Dew I."/>
            <person name="Miller J.R."/>
            <person name="Flanigan M.J."/>
            <person name="Edwards N.J."/>
            <person name="Bolanos R."/>
            <person name="Fasulo D."/>
            <person name="Halldorsson B.V."/>
            <person name="Hannenhalli S."/>
            <person name="Turner R."/>
            <person name="Yooseph S."/>
            <person name="Lu F."/>
            <person name="Nusskern D.R."/>
            <person name="Shue B.C."/>
            <person name="Zheng X.H."/>
            <person name="Zhong F."/>
            <person name="Delcher A.L."/>
            <person name="Huson D.H."/>
            <person name="Kravitz S.A."/>
            <person name="Mouchard L."/>
            <person name="Reinert K."/>
            <person name="Remington K.A."/>
            <person name="Clark A.G."/>
            <person name="Waterman M.S."/>
            <person name="Eichler E.E."/>
            <person name="Adams M.D."/>
            <person name="Hunkapiller M.W."/>
            <person name="Myers E.W."/>
            <person name="Venter J.C."/>
        </authorList>
    </citation>
    <scope>NUCLEOTIDE SEQUENCE [LARGE SCALE GENOMIC DNA]</scope>
</reference>
<reference key="4">
    <citation type="journal article" date="2004" name="Genome Res.">
        <title>The status, quality, and expansion of the NIH full-length cDNA project: the Mammalian Gene Collection (MGC).</title>
        <authorList>
            <consortium name="The MGC Project Team"/>
        </authorList>
    </citation>
    <scope>NUCLEOTIDE SEQUENCE [LARGE SCALE MRNA] (ISOFORMS 2 AND 3)</scope>
    <source>
        <tissue>Lung</tissue>
        <tissue>Skin</tissue>
    </source>
</reference>
<reference key="5">
    <citation type="journal article" date="2008" name="Proc. Natl. Acad. Sci. U.S.A.">
        <title>A quantitative atlas of mitotic phosphorylation.</title>
        <authorList>
            <person name="Dephoure N."/>
            <person name="Zhou C."/>
            <person name="Villen J."/>
            <person name="Beausoleil S.A."/>
            <person name="Bakalarski C.E."/>
            <person name="Elledge S.J."/>
            <person name="Gygi S.P."/>
        </authorList>
    </citation>
    <scope>IDENTIFICATION BY MASS SPECTROMETRY [LARGE SCALE ANALYSIS]</scope>
    <source>
        <tissue>Cervix carcinoma</tissue>
    </source>
</reference>
<reference key="6">
    <citation type="journal article" date="2010" name="Sci. Signal.">
        <title>Quantitative phosphoproteomics reveals widespread full phosphorylation site occupancy during mitosis.</title>
        <authorList>
            <person name="Olsen J.V."/>
            <person name="Vermeulen M."/>
            <person name="Santamaria A."/>
            <person name="Kumar C."/>
            <person name="Miller M.L."/>
            <person name="Jensen L.J."/>
            <person name="Gnad F."/>
            <person name="Cox J."/>
            <person name="Jensen T.S."/>
            <person name="Nigg E.A."/>
            <person name="Brunak S."/>
            <person name="Mann M."/>
        </authorList>
    </citation>
    <scope>IDENTIFICATION BY MASS SPECTROMETRY [LARGE SCALE ANALYSIS]</scope>
    <source>
        <tissue>Cervix carcinoma</tissue>
    </source>
</reference>
<reference key="7">
    <citation type="journal article" date="2012" name="Proc. Natl. Acad. Sci. U.S.A.">
        <title>N-terminal acetylome analyses and functional insights of the N-terminal acetyltransferase NatB.</title>
        <authorList>
            <person name="Van Damme P."/>
            <person name="Lasa M."/>
            <person name="Polevoda B."/>
            <person name="Gazquez C."/>
            <person name="Elosegui-Artola A."/>
            <person name="Kim D.S."/>
            <person name="De Juan-Pardo E."/>
            <person name="Demeyer K."/>
            <person name="Hole K."/>
            <person name="Larrea E."/>
            <person name="Timmerman E."/>
            <person name="Prieto J."/>
            <person name="Arnesen T."/>
            <person name="Sherman F."/>
            <person name="Gevaert K."/>
            <person name="Aldabe R."/>
        </authorList>
    </citation>
    <scope>IDENTIFICATION BY MASS SPECTROMETRY [LARGE SCALE ANALYSIS]</scope>
</reference>
<reference key="8">
    <citation type="journal article" date="2013" name="J. Proteome Res.">
        <title>Toward a comprehensive characterization of a human cancer cell phosphoproteome.</title>
        <authorList>
            <person name="Zhou H."/>
            <person name="Di Palma S."/>
            <person name="Preisinger C."/>
            <person name="Peng M."/>
            <person name="Polat A.N."/>
            <person name="Heck A.J."/>
            <person name="Mohammed S."/>
        </authorList>
    </citation>
    <scope>PHOSPHORYLATION [LARGE SCALE ANALYSIS] AT SER-52; SER-86 AND SER-554</scope>
    <scope>IDENTIFICATION BY MASS SPECTROMETRY [LARGE SCALE ANALYSIS]</scope>
    <source>
        <tissue>Cervix carcinoma</tissue>
        <tissue>Erythroleukemia</tissue>
    </source>
</reference>
<reference key="9">
    <citation type="journal article" date="2014" name="J. Proteomics">
        <title>An enzyme assisted RP-RPLC approach for in-depth analysis of human liver phosphoproteome.</title>
        <authorList>
            <person name="Bian Y."/>
            <person name="Song C."/>
            <person name="Cheng K."/>
            <person name="Dong M."/>
            <person name="Wang F."/>
            <person name="Huang J."/>
            <person name="Sun D."/>
            <person name="Wang L."/>
            <person name="Ye M."/>
            <person name="Zou H."/>
        </authorList>
    </citation>
    <scope>IDENTIFICATION BY MASS SPECTROMETRY [LARGE SCALE ANALYSIS]</scope>
    <source>
        <tissue>Liver</tissue>
    </source>
</reference>
<reference key="10">
    <citation type="journal article" date="2014" name="Nat. Struct. Mol. Biol.">
        <title>Uncovering global SUMOylation signaling networks in a site-specific manner.</title>
        <authorList>
            <person name="Hendriks I.A."/>
            <person name="D'Souza R.C."/>
            <person name="Yang B."/>
            <person name="Verlaan-de Vries M."/>
            <person name="Mann M."/>
            <person name="Vertegaal A.C."/>
        </authorList>
    </citation>
    <scope>SUMOYLATION [LARGE SCALE ANALYSIS] AT LYS-246</scope>
    <scope>IDENTIFICATION BY MASS SPECTROMETRY [LARGE SCALE ANALYSIS]</scope>
</reference>
<reference key="11">
    <citation type="journal article" date="2017" name="Nat. Struct. Mol. Biol.">
        <title>Site-specific mapping of the human SUMO proteome reveals co-modification with phosphorylation.</title>
        <authorList>
            <person name="Hendriks I.A."/>
            <person name="Lyon D."/>
            <person name="Young C."/>
            <person name="Jensen L.J."/>
            <person name="Vertegaal A.C."/>
            <person name="Nielsen M.L."/>
        </authorList>
    </citation>
    <scope>SUMOYLATION [LARGE SCALE ANALYSIS] AT LYS-175; LYS-246 AND LYS-378</scope>
    <scope>IDENTIFICATION BY MASS SPECTROMETRY [LARGE SCALE ANALYSIS]</scope>
</reference>
<reference key="12">
    <citation type="journal article" date="2006" name="Science">
        <title>The consensus coding sequences of human breast and colorectal cancers.</title>
        <authorList>
            <person name="Sjoeblom T."/>
            <person name="Jones S."/>
            <person name="Wood L.D."/>
            <person name="Parsons D.W."/>
            <person name="Lin J."/>
            <person name="Barber T.D."/>
            <person name="Mandelker D."/>
            <person name="Leary R.J."/>
            <person name="Ptak J."/>
            <person name="Silliman N."/>
            <person name="Szabo S."/>
            <person name="Buckhaults P."/>
            <person name="Farrell C."/>
            <person name="Meeh P."/>
            <person name="Markowitz S.D."/>
            <person name="Willis J."/>
            <person name="Dawson D."/>
            <person name="Willson J.K.V."/>
            <person name="Gazdar A.F."/>
            <person name="Hartigan J."/>
            <person name="Wu L."/>
            <person name="Liu C."/>
            <person name="Parmigiani G."/>
            <person name="Park B.H."/>
            <person name="Bachman K.E."/>
            <person name="Papadopoulos N."/>
            <person name="Vogelstein B."/>
            <person name="Kinzler K.W."/>
            <person name="Velculescu V.E."/>
        </authorList>
    </citation>
    <scope>VARIANT [LARGE SCALE ANALYSIS] THR-464</scope>
</reference>
<organism>
    <name type="scientific">Homo sapiens</name>
    <name type="common">Human</name>
    <dbReference type="NCBI Taxonomy" id="9606"/>
    <lineage>
        <taxon>Eukaryota</taxon>
        <taxon>Metazoa</taxon>
        <taxon>Chordata</taxon>
        <taxon>Craniata</taxon>
        <taxon>Vertebrata</taxon>
        <taxon>Euteleostomi</taxon>
        <taxon>Mammalia</taxon>
        <taxon>Eutheria</taxon>
        <taxon>Euarchontoglires</taxon>
        <taxon>Primates</taxon>
        <taxon>Haplorrhini</taxon>
        <taxon>Catarrhini</taxon>
        <taxon>Hominidae</taxon>
        <taxon>Homo</taxon>
    </lineage>
</organism>
<accession>Q8IVH2</accession>
<accession>Q5W098</accession>
<accession>Q7Z7F8</accession>
<accession>Q8IW55</accession>
<accession>Q96E19</accession>
<sequence>MMVESASETIRSAPSGQNGVGSLSGQADGSSGGATGTTASGTGREVTTGADSNGEMSPAELLHFQQQQALQVARQFLLQQASGLSSPGNNDSKQSASAVQVPVSVAMMSPQMLTPQQMQQILSPPQLQALLQQQQALMLQQLQEYYKKQQEQLHLQLLTQQQAGKPQPKEALGNKQLAFQQQLLQMQQLQQQHLLNLQRQGLVSLQPNQASGPLQTLPQAAVCPTDLPQLWKGEGAPGQPAEDSVKQEGLDLTGTAATATSFAAPPKVSPPLSHHTLPNGQPTVLTSRRDSSSHEETPGSHPLYGHGECKWPGCETLCEDLGQFIKHLNTEHALDDRSTAQCRVQMQVVQQLEIQLAKESERLQAMMAHLHMRPSEPKPFSQPLNPVPGSSSFSKVTVSAADSFPDGLVHPPTSAAAPVTPLRPPGLGSASLHGGGPARRRSSDKFCSPISSELAQNHEFYKNADVRPPFTYASLIRQAILETPDRQLTLNEIYNWFTRMFAYFRRNTATWKNAVRHNLSLHKCFVRVENVKGAVWTVDEREYQKRRPPKMTGSPTLVKNMISGLSYGALNASYQAALAESSFPLLNSPGMLNPGSASSLLPLSHDDVGAPVEPLPSNGSSSPPRLSPPQYSHQVQVKEEPAEAEEDRQPGPPLGAPNPSASGPPEDRDLEEELPGEELS</sequence>
<protein>
    <recommendedName>
        <fullName>Forkhead box protein P4</fullName>
    </recommendedName>
    <alternativeName>
        <fullName>Fork head-related protein-like A</fullName>
    </alternativeName>
</protein>
<dbReference type="EMBL" id="AB080747">
    <property type="protein sequence ID" value="BAC53809.1"/>
    <property type="molecule type" value="mRNA"/>
</dbReference>
<dbReference type="EMBL" id="AL139331">
    <property type="status" value="NOT_ANNOTATED_CDS"/>
    <property type="molecule type" value="Genomic_DNA"/>
</dbReference>
<dbReference type="EMBL" id="CH471081">
    <property type="protein sequence ID" value="EAX04047.1"/>
    <property type="molecule type" value="Genomic_DNA"/>
</dbReference>
<dbReference type="EMBL" id="CH471081">
    <property type="protein sequence ID" value="EAX04048.1"/>
    <property type="molecule type" value="Genomic_DNA"/>
</dbReference>
<dbReference type="EMBL" id="CH471081">
    <property type="protein sequence ID" value="EAX04049.1"/>
    <property type="molecule type" value="Genomic_DNA"/>
</dbReference>
<dbReference type="EMBL" id="BC013030">
    <property type="protein sequence ID" value="AAH13030.2"/>
    <property type="molecule type" value="mRNA"/>
</dbReference>
<dbReference type="EMBL" id="BC040962">
    <property type="protein sequence ID" value="AAH40962.1"/>
    <property type="molecule type" value="mRNA"/>
</dbReference>
<dbReference type="EMBL" id="BC052803">
    <property type="protein sequence ID" value="AAH52803.1"/>
    <property type="molecule type" value="mRNA"/>
</dbReference>
<dbReference type="CCDS" id="CCDS34447.1">
    <molecule id="Q8IVH2-1"/>
</dbReference>
<dbReference type="CCDS" id="CCDS34448.1">
    <molecule id="Q8IVH2-2"/>
</dbReference>
<dbReference type="CCDS" id="CCDS4856.1">
    <molecule id="Q8IVH2-3"/>
</dbReference>
<dbReference type="RefSeq" id="NP_001012426.1">
    <molecule id="Q8IVH2-1"/>
    <property type="nucleotide sequence ID" value="NM_001012426.2"/>
</dbReference>
<dbReference type="RefSeq" id="NP_001012427.1">
    <molecule id="Q8IVH2-2"/>
    <property type="nucleotide sequence ID" value="NM_001012427.2"/>
</dbReference>
<dbReference type="RefSeq" id="NP_612466.1">
    <molecule id="Q8IVH2-3"/>
    <property type="nucleotide sequence ID" value="NM_138457.3"/>
</dbReference>
<dbReference type="PDB" id="6XAT">
    <property type="method" value="X-ray"/>
    <property type="resolution" value="2.20 A"/>
    <property type="chains" value="A=464-550"/>
</dbReference>
<dbReference type="PDBsum" id="6XAT"/>
<dbReference type="SMR" id="Q8IVH2"/>
<dbReference type="BioGRID" id="125474">
    <property type="interactions" value="97"/>
</dbReference>
<dbReference type="ComplexPortal" id="CPX-8804">
    <property type="entry name" value="FOXP1-FOXP4 transcription factor complex"/>
</dbReference>
<dbReference type="ComplexPortal" id="CPX-8805">
    <property type="entry name" value="FOXP2-FOXP4 transcription factor complex"/>
</dbReference>
<dbReference type="ComplexPortal" id="CPX-8807">
    <property type="entry name" value="FOXP4 transcription factor homodimer"/>
</dbReference>
<dbReference type="DIP" id="DIP-59301N"/>
<dbReference type="FunCoup" id="Q8IVH2">
    <property type="interactions" value="1587"/>
</dbReference>
<dbReference type="IntAct" id="Q8IVH2">
    <property type="interactions" value="63"/>
</dbReference>
<dbReference type="MINT" id="Q8IVH2"/>
<dbReference type="STRING" id="9606.ENSP00000362151"/>
<dbReference type="GlyGen" id="Q8IVH2">
    <property type="glycosylation" value="4 sites, 1 O-linked glycan (4 sites)"/>
</dbReference>
<dbReference type="iPTMnet" id="Q8IVH2"/>
<dbReference type="PhosphoSitePlus" id="Q8IVH2"/>
<dbReference type="BioMuta" id="FOXP4"/>
<dbReference type="DMDM" id="46395887"/>
<dbReference type="jPOST" id="Q8IVH2"/>
<dbReference type="MassIVE" id="Q8IVH2"/>
<dbReference type="PaxDb" id="9606-ENSP00000362151"/>
<dbReference type="PeptideAtlas" id="Q8IVH2"/>
<dbReference type="ProteomicsDB" id="70705">
    <molecule id="Q8IVH2-1"/>
</dbReference>
<dbReference type="ProteomicsDB" id="70706">
    <molecule id="Q8IVH2-2"/>
</dbReference>
<dbReference type="ProteomicsDB" id="70707">
    <molecule id="Q8IVH2-3"/>
</dbReference>
<dbReference type="Pumba" id="Q8IVH2"/>
<dbReference type="ABCD" id="Q8IVH2">
    <property type="antibodies" value="2 sequenced antibodies"/>
</dbReference>
<dbReference type="Antibodypedia" id="1453">
    <property type="antibodies" value="288 antibodies from 35 providers"/>
</dbReference>
<dbReference type="DNASU" id="116113"/>
<dbReference type="Ensembl" id="ENST00000307972.10">
    <molecule id="Q8IVH2-1"/>
    <property type="protein sequence ID" value="ENSP00000309823.4"/>
    <property type="gene ID" value="ENSG00000137166.18"/>
</dbReference>
<dbReference type="Ensembl" id="ENST00000373057.7">
    <molecule id="Q8IVH2-2"/>
    <property type="protein sequence ID" value="ENSP00000362148.3"/>
    <property type="gene ID" value="ENSG00000137166.18"/>
</dbReference>
<dbReference type="Ensembl" id="ENST00000373063.7">
    <molecule id="Q8IVH2-3"/>
    <property type="protein sequence ID" value="ENSP00000362154.3"/>
    <property type="gene ID" value="ENSG00000137166.18"/>
</dbReference>
<dbReference type="Ensembl" id="ENST00000704756.1">
    <molecule id="Q8IVH2-1"/>
    <property type="protein sequence ID" value="ENSP00000516024.1"/>
    <property type="gene ID" value="ENSG00000137166.18"/>
</dbReference>
<dbReference type="GeneID" id="116113"/>
<dbReference type="KEGG" id="hsa:116113"/>
<dbReference type="MANE-Select" id="ENST00000307972.10">
    <property type="protein sequence ID" value="ENSP00000309823.4"/>
    <property type="RefSeq nucleotide sequence ID" value="NM_001012426.2"/>
    <property type="RefSeq protein sequence ID" value="NP_001012426.1"/>
</dbReference>
<dbReference type="UCSC" id="uc003oql.4">
    <molecule id="Q8IVH2-1"/>
    <property type="organism name" value="human"/>
</dbReference>
<dbReference type="AGR" id="HGNC:20842"/>
<dbReference type="CTD" id="116113"/>
<dbReference type="DisGeNET" id="116113"/>
<dbReference type="GeneCards" id="FOXP4"/>
<dbReference type="HGNC" id="HGNC:20842">
    <property type="gene designation" value="FOXP4"/>
</dbReference>
<dbReference type="HPA" id="ENSG00000137166">
    <property type="expression patterns" value="Low tissue specificity"/>
</dbReference>
<dbReference type="MalaCards" id="FOXP4"/>
<dbReference type="MIM" id="608924">
    <property type="type" value="gene"/>
</dbReference>
<dbReference type="neXtProt" id="NX_Q8IVH2"/>
<dbReference type="OpenTargets" id="ENSG00000137166"/>
<dbReference type="PharmGKB" id="PA134943098"/>
<dbReference type="VEuPathDB" id="HostDB:ENSG00000137166"/>
<dbReference type="eggNOG" id="KOG4385">
    <property type="taxonomic scope" value="Eukaryota"/>
</dbReference>
<dbReference type="GeneTree" id="ENSGT00940000158700"/>
<dbReference type="HOGENOM" id="CLU_019502_3_1_1"/>
<dbReference type="InParanoid" id="Q8IVH2"/>
<dbReference type="OMA" id="KQQPKEX"/>
<dbReference type="OrthoDB" id="5830876at2759"/>
<dbReference type="PAN-GO" id="Q8IVH2">
    <property type="GO annotations" value="4 GO annotations based on evolutionary models"/>
</dbReference>
<dbReference type="PhylomeDB" id="Q8IVH2"/>
<dbReference type="TreeFam" id="TF326978"/>
<dbReference type="PathwayCommons" id="Q8IVH2"/>
<dbReference type="SignaLink" id="Q8IVH2"/>
<dbReference type="BioGRID-ORCS" id="116113">
    <property type="hits" value="24 hits in 1181 CRISPR screens"/>
</dbReference>
<dbReference type="ChiTaRS" id="FOXP4">
    <property type="organism name" value="human"/>
</dbReference>
<dbReference type="GeneWiki" id="FOXP4"/>
<dbReference type="GenomeRNAi" id="116113"/>
<dbReference type="Pharos" id="Q8IVH2">
    <property type="development level" value="Tbio"/>
</dbReference>
<dbReference type="PRO" id="PR:Q8IVH2"/>
<dbReference type="Proteomes" id="UP000005640">
    <property type="component" value="Chromosome 6"/>
</dbReference>
<dbReference type="RNAct" id="Q8IVH2">
    <property type="molecule type" value="protein"/>
</dbReference>
<dbReference type="Bgee" id="ENSG00000137166">
    <property type="expression patterns" value="Expressed in kidney epithelium and 166 other cell types or tissues"/>
</dbReference>
<dbReference type="ExpressionAtlas" id="Q8IVH2">
    <property type="expression patterns" value="baseline and differential"/>
</dbReference>
<dbReference type="GO" id="GO:0000785">
    <property type="term" value="C:chromatin"/>
    <property type="evidence" value="ECO:0000247"/>
    <property type="project" value="NTNU_SB"/>
</dbReference>
<dbReference type="GO" id="GO:0005829">
    <property type="term" value="C:cytosol"/>
    <property type="evidence" value="ECO:0000314"/>
    <property type="project" value="HPA"/>
</dbReference>
<dbReference type="GO" id="GO:0005654">
    <property type="term" value="C:nucleoplasm"/>
    <property type="evidence" value="ECO:0000314"/>
    <property type="project" value="HPA"/>
</dbReference>
<dbReference type="GO" id="GO:0005634">
    <property type="term" value="C:nucleus"/>
    <property type="evidence" value="ECO:0000318"/>
    <property type="project" value="GO_Central"/>
</dbReference>
<dbReference type="GO" id="GO:0000981">
    <property type="term" value="F:DNA-binding transcription factor activity, RNA polymerase II-specific"/>
    <property type="evidence" value="ECO:0000247"/>
    <property type="project" value="NTNU_SB"/>
</dbReference>
<dbReference type="GO" id="GO:0001227">
    <property type="term" value="F:DNA-binding transcription repressor activity, RNA polymerase II-specific"/>
    <property type="evidence" value="ECO:0000318"/>
    <property type="project" value="GO_Central"/>
</dbReference>
<dbReference type="GO" id="GO:0000978">
    <property type="term" value="F:RNA polymerase II cis-regulatory region sequence-specific DNA binding"/>
    <property type="evidence" value="ECO:0000318"/>
    <property type="project" value="GO_Central"/>
</dbReference>
<dbReference type="GO" id="GO:0008270">
    <property type="term" value="F:zinc ion binding"/>
    <property type="evidence" value="ECO:0007669"/>
    <property type="project" value="UniProtKB-KW"/>
</dbReference>
<dbReference type="GO" id="GO:0006357">
    <property type="term" value="P:regulation of transcription by RNA polymerase II"/>
    <property type="evidence" value="ECO:0000318"/>
    <property type="project" value="GO_Central"/>
</dbReference>
<dbReference type="CDD" id="cd20067">
    <property type="entry name" value="FH_FOXP4"/>
    <property type="match status" value="1"/>
</dbReference>
<dbReference type="FunFam" id="1.20.5.340:FF:000005">
    <property type="entry name" value="Forkhead box P1, isoform CRA_f"/>
    <property type="match status" value="1"/>
</dbReference>
<dbReference type="FunFam" id="1.10.10.10:FF:000010">
    <property type="entry name" value="Forkhead box P2 isoform B"/>
    <property type="match status" value="1"/>
</dbReference>
<dbReference type="Gene3D" id="1.20.5.340">
    <property type="match status" value="1"/>
</dbReference>
<dbReference type="Gene3D" id="1.10.10.10">
    <property type="entry name" value="Winged helix-like DNA-binding domain superfamily/Winged helix DNA-binding domain"/>
    <property type="match status" value="1"/>
</dbReference>
<dbReference type="InterPro" id="IPR047414">
    <property type="entry name" value="FH_FOXP4"/>
</dbReference>
<dbReference type="InterPro" id="IPR001766">
    <property type="entry name" value="Fork_head_dom"/>
</dbReference>
<dbReference type="InterPro" id="IPR050998">
    <property type="entry name" value="FOXP"/>
</dbReference>
<dbReference type="InterPro" id="IPR032354">
    <property type="entry name" value="FOXP-CC"/>
</dbReference>
<dbReference type="InterPro" id="IPR030456">
    <property type="entry name" value="TF_fork_head_CS_2"/>
</dbReference>
<dbReference type="InterPro" id="IPR036388">
    <property type="entry name" value="WH-like_DNA-bd_sf"/>
</dbReference>
<dbReference type="InterPro" id="IPR036390">
    <property type="entry name" value="WH_DNA-bd_sf"/>
</dbReference>
<dbReference type="PANTHER" id="PTHR45796">
    <property type="entry name" value="FORKHEAD BOX P, ISOFORM C"/>
    <property type="match status" value="1"/>
</dbReference>
<dbReference type="PANTHER" id="PTHR45796:SF7">
    <property type="entry name" value="FORKHEAD BOX PROTEIN P4"/>
    <property type="match status" value="1"/>
</dbReference>
<dbReference type="Pfam" id="PF00250">
    <property type="entry name" value="Forkhead"/>
    <property type="match status" value="1"/>
</dbReference>
<dbReference type="Pfam" id="PF16159">
    <property type="entry name" value="FOXP-CC"/>
    <property type="match status" value="1"/>
</dbReference>
<dbReference type="PRINTS" id="PR00053">
    <property type="entry name" value="FORKHEAD"/>
</dbReference>
<dbReference type="SMART" id="SM00339">
    <property type="entry name" value="FH"/>
    <property type="match status" value="1"/>
</dbReference>
<dbReference type="SUPFAM" id="SSF46785">
    <property type="entry name" value="Winged helix' DNA-binding domain"/>
    <property type="match status" value="1"/>
</dbReference>
<dbReference type="PROSITE" id="PS00658">
    <property type="entry name" value="FORK_HEAD_2"/>
    <property type="match status" value="1"/>
</dbReference>
<dbReference type="PROSITE" id="PS50039">
    <property type="entry name" value="FORK_HEAD_3"/>
    <property type="match status" value="1"/>
</dbReference>
<dbReference type="PROSITE" id="PS00028">
    <property type="entry name" value="ZINC_FINGER_C2H2_1"/>
    <property type="match status" value="1"/>
</dbReference>
<gene>
    <name type="primary">FOXP4</name>
    <name type="synonym">FKHLA</name>
</gene>